<feature type="chain" id="PRO_0000243967" description="Uncharacterized protein R503">
    <location>
        <begin position="1"/>
        <end position="232"/>
    </location>
</feature>
<name>YR503_MIMIV</name>
<gene>
    <name type="ordered locus">MIMI_R503</name>
</gene>
<keyword id="KW-1185">Reference proteome</keyword>
<reference key="1">
    <citation type="journal article" date="2004" name="Science">
        <title>The 1.2-megabase genome sequence of Mimivirus.</title>
        <authorList>
            <person name="Raoult D."/>
            <person name="Audic S."/>
            <person name="Robert C."/>
            <person name="Abergel C."/>
            <person name="Renesto P."/>
            <person name="Ogata H."/>
            <person name="La Scola B."/>
            <person name="Susan M."/>
            <person name="Claverie J.-M."/>
        </authorList>
    </citation>
    <scope>NUCLEOTIDE SEQUENCE [LARGE SCALE GENOMIC DNA]</scope>
    <source>
        <strain>Rowbotham-Bradford</strain>
    </source>
</reference>
<protein>
    <recommendedName>
        <fullName>Uncharacterized protein R503</fullName>
    </recommendedName>
</protein>
<organismHost>
    <name type="scientific">Acanthamoeba polyphaga</name>
    <name type="common">Amoeba</name>
    <dbReference type="NCBI Taxonomy" id="5757"/>
</organismHost>
<sequence>MNYNKENILTMSDKIDFSLIKFQDSKFKQTCLKYISNNGKKLSFRSERIPSESILICGMNYGLMIYVDDVMRSCLEHMDNYFSSDEVKKSMFGPKYDKMTYVPTIRKGKMGDYIILHFQKSQEEIDSVICKNGFKQDIKLTGKYTSSGKNEYKIHDSSNNSETSLKDYLSQSKDIQIVFHYKSISKRPNTNSYGVKLSITKMELDNPIKTNRYNKIYYNLDVTKSKSLSIKI</sequence>
<accession>Q5UQ66</accession>
<organism>
    <name type="scientific">Acanthamoeba polyphaga mimivirus</name>
    <name type="common">APMV</name>
    <dbReference type="NCBI Taxonomy" id="212035"/>
    <lineage>
        <taxon>Viruses</taxon>
        <taxon>Varidnaviria</taxon>
        <taxon>Bamfordvirae</taxon>
        <taxon>Nucleocytoviricota</taxon>
        <taxon>Megaviricetes</taxon>
        <taxon>Imitervirales</taxon>
        <taxon>Mimiviridae</taxon>
        <taxon>Megamimivirinae</taxon>
        <taxon>Mimivirus</taxon>
        <taxon>Mimivirus bradfordmassiliense</taxon>
    </lineage>
</organism>
<proteinExistence type="predicted"/>
<dbReference type="EMBL" id="AY653733">
    <property type="protein sequence ID" value="AAV50767.1"/>
    <property type="molecule type" value="Genomic_DNA"/>
</dbReference>
<dbReference type="KEGG" id="vg:9925134"/>
<dbReference type="Proteomes" id="UP000001134">
    <property type="component" value="Genome"/>
</dbReference>